<organism>
    <name type="scientific">Porphyromonas gingivalis (strain ATCC BAA-308 / W83)</name>
    <dbReference type="NCBI Taxonomy" id="242619"/>
    <lineage>
        <taxon>Bacteria</taxon>
        <taxon>Pseudomonadati</taxon>
        <taxon>Bacteroidota</taxon>
        <taxon>Bacteroidia</taxon>
        <taxon>Bacteroidales</taxon>
        <taxon>Porphyromonadaceae</taxon>
        <taxon>Porphyromonas</taxon>
    </lineage>
</organism>
<proteinExistence type="inferred from homology"/>
<protein>
    <recommendedName>
        <fullName evidence="1">Aspartate carbamoyltransferase regulatory chain</fullName>
    </recommendedName>
</protein>
<accession>Q7MX57</accession>
<reference key="1">
    <citation type="journal article" date="2003" name="J. Bacteriol.">
        <title>Complete genome sequence of the oral pathogenic bacterium Porphyromonas gingivalis strain W83.</title>
        <authorList>
            <person name="Nelson K.E."/>
            <person name="Fleischmann R.D."/>
            <person name="DeBoy R.T."/>
            <person name="Paulsen I.T."/>
            <person name="Fouts D.E."/>
            <person name="Eisen J.A."/>
            <person name="Daugherty S.C."/>
            <person name="Dodson R.J."/>
            <person name="Durkin A.S."/>
            <person name="Gwinn M.L."/>
            <person name="Haft D.H."/>
            <person name="Kolonay J.F."/>
            <person name="Nelson W.C."/>
            <person name="Mason T.M."/>
            <person name="Tallon L."/>
            <person name="Gray J."/>
            <person name="Granger D."/>
            <person name="Tettelin H."/>
            <person name="Dong H."/>
            <person name="Galvin J.L."/>
            <person name="Duncan M.J."/>
            <person name="Dewhirst F.E."/>
            <person name="Fraser C.M."/>
        </authorList>
    </citation>
    <scope>NUCLEOTIDE SEQUENCE [LARGE SCALE GENOMIC DNA]</scope>
    <source>
        <strain>ATCC BAA-308 / W83</strain>
    </source>
</reference>
<sequence length="151" mass="17401">MKKEEMLVAAIRNGIVIDHIPPTKLFKVATLLQLDDLDKRITIGNNLRSRSHGSKGVIKIEDKTFEEEELNRIALIAPNVRLNIIRDYEVVEKRQVEVPHEIVGLVRCPNPKCITNNEPMQTRFRVIDAEQCTLRCDYCERKLAGDRIELL</sequence>
<keyword id="KW-0479">Metal-binding</keyword>
<keyword id="KW-0665">Pyrimidine biosynthesis</keyword>
<keyword id="KW-1185">Reference proteome</keyword>
<keyword id="KW-0862">Zinc</keyword>
<name>PYRI_PORGI</name>
<comment type="function">
    <text evidence="1">Involved in allosteric regulation of aspartate carbamoyltransferase.</text>
</comment>
<comment type="cofactor">
    <cofactor evidence="1">
        <name>Zn(2+)</name>
        <dbReference type="ChEBI" id="CHEBI:29105"/>
    </cofactor>
    <text evidence="1">Binds 1 zinc ion per subunit.</text>
</comment>
<comment type="subunit">
    <text evidence="1">Contains catalytic and regulatory chains.</text>
</comment>
<comment type="similarity">
    <text evidence="1">Belongs to the PyrI family.</text>
</comment>
<dbReference type="EMBL" id="AE015924">
    <property type="protein sequence ID" value="AAQ65568.1"/>
    <property type="molecule type" value="Genomic_DNA"/>
</dbReference>
<dbReference type="RefSeq" id="WP_004584887.1">
    <property type="nucleotide sequence ID" value="NC_002950.2"/>
</dbReference>
<dbReference type="SMR" id="Q7MX57"/>
<dbReference type="STRING" id="242619.PG_0358"/>
<dbReference type="EnsemblBacteria" id="AAQ65568">
    <property type="protein sequence ID" value="AAQ65568"/>
    <property type="gene ID" value="PG_0358"/>
</dbReference>
<dbReference type="GeneID" id="29256777"/>
<dbReference type="KEGG" id="pgi:PG_0358"/>
<dbReference type="eggNOG" id="COG1781">
    <property type="taxonomic scope" value="Bacteria"/>
</dbReference>
<dbReference type="HOGENOM" id="CLU_128576_0_0_10"/>
<dbReference type="Proteomes" id="UP000000588">
    <property type="component" value="Chromosome"/>
</dbReference>
<dbReference type="GO" id="GO:0009347">
    <property type="term" value="C:aspartate carbamoyltransferase complex"/>
    <property type="evidence" value="ECO:0007669"/>
    <property type="project" value="InterPro"/>
</dbReference>
<dbReference type="GO" id="GO:0046872">
    <property type="term" value="F:metal ion binding"/>
    <property type="evidence" value="ECO:0007669"/>
    <property type="project" value="UniProtKB-KW"/>
</dbReference>
<dbReference type="GO" id="GO:0006207">
    <property type="term" value="P:'de novo' pyrimidine nucleobase biosynthetic process"/>
    <property type="evidence" value="ECO:0007669"/>
    <property type="project" value="InterPro"/>
</dbReference>
<dbReference type="GO" id="GO:0006221">
    <property type="term" value="P:pyrimidine nucleotide biosynthetic process"/>
    <property type="evidence" value="ECO:0007669"/>
    <property type="project" value="UniProtKB-UniRule"/>
</dbReference>
<dbReference type="Gene3D" id="2.30.30.20">
    <property type="entry name" value="Aspartate carbamoyltransferase regulatory subunit, C-terminal domain"/>
    <property type="match status" value="1"/>
</dbReference>
<dbReference type="Gene3D" id="3.30.70.140">
    <property type="entry name" value="Aspartate carbamoyltransferase regulatory subunit, N-terminal domain"/>
    <property type="match status" value="1"/>
</dbReference>
<dbReference type="HAMAP" id="MF_00002">
    <property type="entry name" value="Asp_carb_tr_reg"/>
    <property type="match status" value="1"/>
</dbReference>
<dbReference type="InterPro" id="IPR020545">
    <property type="entry name" value="Asp_carbamoyltransf_reg_N"/>
</dbReference>
<dbReference type="InterPro" id="IPR002801">
    <property type="entry name" value="Asp_carbamoylTrfase_reg"/>
</dbReference>
<dbReference type="InterPro" id="IPR020542">
    <property type="entry name" value="Asp_carbamoyltrfase_reg_C"/>
</dbReference>
<dbReference type="InterPro" id="IPR036792">
    <property type="entry name" value="Asp_carbatrfase_reg_C_sf"/>
</dbReference>
<dbReference type="InterPro" id="IPR036793">
    <property type="entry name" value="Asp_carbatrfase_reg_N_sf"/>
</dbReference>
<dbReference type="NCBIfam" id="TIGR00240">
    <property type="entry name" value="ATCase_reg"/>
    <property type="match status" value="1"/>
</dbReference>
<dbReference type="PANTHER" id="PTHR35805">
    <property type="entry name" value="ASPARTATE CARBAMOYLTRANSFERASE REGULATORY CHAIN"/>
    <property type="match status" value="1"/>
</dbReference>
<dbReference type="PANTHER" id="PTHR35805:SF1">
    <property type="entry name" value="ASPARTATE CARBAMOYLTRANSFERASE REGULATORY CHAIN"/>
    <property type="match status" value="1"/>
</dbReference>
<dbReference type="Pfam" id="PF01948">
    <property type="entry name" value="PyrI"/>
    <property type="match status" value="1"/>
</dbReference>
<dbReference type="Pfam" id="PF02748">
    <property type="entry name" value="PyrI_C"/>
    <property type="match status" value="1"/>
</dbReference>
<dbReference type="SUPFAM" id="SSF57825">
    <property type="entry name" value="Aspartate carbamoyltransferase, Regulatory-chain, C-terminal domain"/>
    <property type="match status" value="1"/>
</dbReference>
<dbReference type="SUPFAM" id="SSF54893">
    <property type="entry name" value="Aspartate carbamoyltransferase, Regulatory-chain, N-terminal domain"/>
    <property type="match status" value="1"/>
</dbReference>
<gene>
    <name evidence="1" type="primary">pyrI</name>
    <name type="ordered locus">PG_0358</name>
</gene>
<evidence type="ECO:0000255" key="1">
    <source>
        <dbReference type="HAMAP-Rule" id="MF_00002"/>
    </source>
</evidence>
<feature type="chain" id="PRO_0000142311" description="Aspartate carbamoyltransferase regulatory chain">
    <location>
        <begin position="1"/>
        <end position="151"/>
    </location>
</feature>
<feature type="binding site" evidence="1">
    <location>
        <position position="108"/>
    </location>
    <ligand>
        <name>Zn(2+)</name>
        <dbReference type="ChEBI" id="CHEBI:29105"/>
    </ligand>
</feature>
<feature type="binding site" evidence="1">
    <location>
        <position position="113"/>
    </location>
    <ligand>
        <name>Zn(2+)</name>
        <dbReference type="ChEBI" id="CHEBI:29105"/>
    </ligand>
</feature>
<feature type="binding site" evidence="1">
    <location>
        <position position="136"/>
    </location>
    <ligand>
        <name>Zn(2+)</name>
        <dbReference type="ChEBI" id="CHEBI:29105"/>
    </ligand>
</feature>
<feature type="binding site" evidence="1">
    <location>
        <position position="139"/>
    </location>
    <ligand>
        <name>Zn(2+)</name>
        <dbReference type="ChEBI" id="CHEBI:29105"/>
    </ligand>
</feature>